<keyword id="KW-1003">Cell membrane</keyword>
<keyword id="KW-0472">Membrane</keyword>
<keyword id="KW-0614">Plasmid</keyword>
<keyword id="KW-1185">Reference proteome</keyword>
<keyword id="KW-0812">Transmembrane</keyword>
<keyword id="KW-1133">Transmembrane helix</keyword>
<reference key="1">
    <citation type="journal article" date="2001" name="Proc. Natl. Acad. Sci. U.S.A.">
        <title>Nucleotide sequence and predicted functions of the entire Sinorhizobium meliloti pSymA megaplasmid.</title>
        <authorList>
            <person name="Barnett M.J."/>
            <person name="Fisher R.F."/>
            <person name="Jones T."/>
            <person name="Komp C."/>
            <person name="Abola A.P."/>
            <person name="Barloy-Hubler F."/>
            <person name="Bowser L."/>
            <person name="Capela D."/>
            <person name="Galibert F."/>
            <person name="Gouzy J."/>
            <person name="Gurjal M."/>
            <person name="Hong A."/>
            <person name="Huizar L."/>
            <person name="Hyman R.W."/>
            <person name="Kahn D."/>
            <person name="Kahn M.L."/>
            <person name="Kalman S."/>
            <person name="Keating D.H."/>
            <person name="Palm C."/>
            <person name="Peck M.C."/>
            <person name="Surzycki R."/>
            <person name="Wells D.H."/>
            <person name="Yeh K.-C."/>
            <person name="Davis R.W."/>
            <person name="Federspiel N.A."/>
            <person name="Long S.R."/>
        </authorList>
    </citation>
    <scope>NUCLEOTIDE SEQUENCE [LARGE SCALE GENOMIC DNA]</scope>
    <source>
        <strain>1021</strain>
    </source>
</reference>
<reference key="2">
    <citation type="journal article" date="2001" name="Science">
        <title>The composite genome of the legume symbiont Sinorhizobium meliloti.</title>
        <authorList>
            <person name="Galibert F."/>
            <person name="Finan T.M."/>
            <person name="Long S.R."/>
            <person name="Puehler A."/>
            <person name="Abola P."/>
            <person name="Ampe F."/>
            <person name="Barloy-Hubler F."/>
            <person name="Barnett M.J."/>
            <person name="Becker A."/>
            <person name="Boistard P."/>
            <person name="Bothe G."/>
            <person name="Boutry M."/>
            <person name="Bowser L."/>
            <person name="Buhrmester J."/>
            <person name="Cadieu E."/>
            <person name="Capela D."/>
            <person name="Chain P."/>
            <person name="Cowie A."/>
            <person name="Davis R.W."/>
            <person name="Dreano S."/>
            <person name="Federspiel N.A."/>
            <person name="Fisher R.F."/>
            <person name="Gloux S."/>
            <person name="Godrie T."/>
            <person name="Goffeau A."/>
            <person name="Golding B."/>
            <person name="Gouzy J."/>
            <person name="Gurjal M."/>
            <person name="Hernandez-Lucas I."/>
            <person name="Hong A."/>
            <person name="Huizar L."/>
            <person name="Hyman R.W."/>
            <person name="Jones T."/>
            <person name="Kahn D."/>
            <person name="Kahn M.L."/>
            <person name="Kalman S."/>
            <person name="Keating D.H."/>
            <person name="Kiss E."/>
            <person name="Komp C."/>
            <person name="Lelaure V."/>
            <person name="Masuy D."/>
            <person name="Palm C."/>
            <person name="Peck M.C."/>
            <person name="Pohl T.M."/>
            <person name="Portetelle D."/>
            <person name="Purnelle B."/>
            <person name="Ramsperger U."/>
            <person name="Surzycki R."/>
            <person name="Thebault P."/>
            <person name="Vandenbol M."/>
            <person name="Vorhoelter F.J."/>
            <person name="Weidner S."/>
            <person name="Wells D.H."/>
            <person name="Wong K."/>
            <person name="Yeh K.-C."/>
            <person name="Batut J."/>
        </authorList>
    </citation>
    <scope>NUCLEOTIDE SEQUENCE [LARGE SCALE GENOMIC DNA]</scope>
    <source>
        <strain>1021</strain>
    </source>
</reference>
<name>Y4357_RHIME</name>
<organism>
    <name type="scientific">Rhizobium meliloti (strain 1021)</name>
    <name type="common">Ensifer meliloti</name>
    <name type="synonym">Sinorhizobium meliloti</name>
    <dbReference type="NCBI Taxonomy" id="266834"/>
    <lineage>
        <taxon>Bacteria</taxon>
        <taxon>Pseudomonadati</taxon>
        <taxon>Pseudomonadota</taxon>
        <taxon>Alphaproteobacteria</taxon>
        <taxon>Hyphomicrobiales</taxon>
        <taxon>Rhizobiaceae</taxon>
        <taxon>Sinorhizobium/Ensifer group</taxon>
        <taxon>Sinorhizobium</taxon>
    </lineage>
</organism>
<proteinExistence type="inferred from homology"/>
<dbReference type="EMBL" id="AE006469">
    <property type="protein sequence ID" value="AAK65615.1"/>
    <property type="molecule type" value="Genomic_DNA"/>
</dbReference>
<dbReference type="PIR" id="E95381">
    <property type="entry name" value="E95381"/>
</dbReference>
<dbReference type="RefSeq" id="NP_436203.1">
    <property type="nucleotide sequence ID" value="NC_003037.1"/>
</dbReference>
<dbReference type="RefSeq" id="WP_010967919.1">
    <property type="nucleotide sequence ID" value="NC_003037.1"/>
</dbReference>
<dbReference type="SMR" id="Q92YC7"/>
<dbReference type="EnsemblBacteria" id="AAK65615">
    <property type="protein sequence ID" value="AAK65615"/>
    <property type="gene ID" value="SMa1737"/>
</dbReference>
<dbReference type="KEGG" id="sme:SMa1737"/>
<dbReference type="PATRIC" id="fig|266834.11.peg.986"/>
<dbReference type="HOGENOM" id="CLU_033541_0_1_5"/>
<dbReference type="OrthoDB" id="5393513at2"/>
<dbReference type="Proteomes" id="UP000001976">
    <property type="component" value="Plasmid pSymA"/>
</dbReference>
<dbReference type="GO" id="GO:0005886">
    <property type="term" value="C:plasma membrane"/>
    <property type="evidence" value="ECO:0007669"/>
    <property type="project" value="UniProtKB-SubCell"/>
</dbReference>
<dbReference type="InterPro" id="IPR018383">
    <property type="entry name" value="UPF0324_pro"/>
</dbReference>
<dbReference type="PANTHER" id="PTHR30106">
    <property type="entry name" value="INNER MEMBRANE PROTEIN YEIH-RELATED"/>
    <property type="match status" value="1"/>
</dbReference>
<dbReference type="PANTHER" id="PTHR30106:SF2">
    <property type="entry name" value="UPF0324 INNER MEMBRANE PROTEIN YEIH"/>
    <property type="match status" value="1"/>
</dbReference>
<dbReference type="Pfam" id="PF03601">
    <property type="entry name" value="Cons_hypoth698"/>
    <property type="match status" value="1"/>
</dbReference>
<gene>
    <name type="ordered locus">RA0957</name>
    <name type="ORF">SMa1737</name>
</gene>
<accession>Q92YC7</accession>
<evidence type="ECO:0000255" key="1"/>
<evidence type="ECO:0000305" key="2"/>
<protein>
    <recommendedName>
        <fullName>UPF0324 membrane protein RA0957</fullName>
    </recommendedName>
</protein>
<sequence>MSDRTEQVATSDIPRPTQNLRTRVVSYFPGLAVAVLIAISAQFLSEHYGAPATLMALLLGMSLNFLSESGARTVPGIHFASRAVLRFGVALLGARVSLEVLSDLGVSLLCLVTTALACTILFAIIVGKFAGMDWRLSLLTGGAVAICGASAAVALNAVLPPRQNSDRDLALTIVAITLLSTSAMVLYPVLASHLQFDAKESGVFIGGTIHDVAQVVGAGFAMSEETGQIATLVKIVRVSLLAPTIIAVLIMVTVLGAGAGQKPQKLGQVIPGFVLGFAFLAALKSMGFLPAAAGDVANDLSRWLLLIALGAVGLKTSVKEFASIRPSHVTLALLATAFLAAFIVVGLLWYRG</sequence>
<feature type="chain" id="PRO_0000157443" description="UPF0324 membrane protein RA0957">
    <location>
        <begin position="1"/>
        <end position="352"/>
    </location>
</feature>
<feature type="transmembrane region" description="Helical" evidence="1">
    <location>
        <begin position="24"/>
        <end position="43"/>
    </location>
</feature>
<feature type="transmembrane region" description="Helical" evidence="1">
    <location>
        <begin position="48"/>
        <end position="67"/>
    </location>
</feature>
<feature type="transmembrane region" description="Helical" evidence="1">
    <location>
        <begin position="104"/>
        <end position="126"/>
    </location>
</feature>
<feature type="transmembrane region" description="Helical" evidence="1">
    <location>
        <begin position="136"/>
        <end position="158"/>
    </location>
</feature>
<feature type="transmembrane region" description="Helical" evidence="1">
    <location>
        <begin position="169"/>
        <end position="191"/>
    </location>
</feature>
<feature type="transmembrane region" description="Helical" evidence="1">
    <location>
        <begin position="201"/>
        <end position="223"/>
    </location>
</feature>
<feature type="transmembrane region" description="Helical" evidence="1">
    <location>
        <begin position="235"/>
        <end position="257"/>
    </location>
</feature>
<feature type="transmembrane region" description="Helical" evidence="1">
    <location>
        <begin position="272"/>
        <end position="294"/>
    </location>
</feature>
<feature type="transmembrane region" description="Helical" evidence="1">
    <location>
        <begin position="301"/>
        <end position="318"/>
    </location>
</feature>
<feature type="transmembrane region" description="Helical" evidence="1">
    <location>
        <begin position="328"/>
        <end position="350"/>
    </location>
</feature>
<comment type="subcellular location">
    <subcellularLocation>
        <location evidence="2">Cell membrane</location>
        <topology evidence="2">Multi-pass membrane protein</topology>
    </subcellularLocation>
</comment>
<comment type="similarity">
    <text evidence="2">Belongs to the UPF0324 family.</text>
</comment>
<geneLocation type="plasmid">
    <name>pSymA</name>
    <name>megaplasmid 1</name>
</geneLocation>